<evidence type="ECO:0000255" key="1">
    <source>
        <dbReference type="HAMAP-Rule" id="MF_00173"/>
    </source>
</evidence>
<accession>B1KGG6</accession>
<organism>
    <name type="scientific">Shewanella woodyi (strain ATCC 51908 / MS32)</name>
    <dbReference type="NCBI Taxonomy" id="392500"/>
    <lineage>
        <taxon>Bacteria</taxon>
        <taxon>Pseudomonadati</taxon>
        <taxon>Pseudomonadota</taxon>
        <taxon>Gammaproteobacteria</taxon>
        <taxon>Alteromonadales</taxon>
        <taxon>Shewanellaceae</taxon>
        <taxon>Shewanella</taxon>
    </lineage>
</organism>
<reference key="1">
    <citation type="submission" date="2008-02" db="EMBL/GenBank/DDBJ databases">
        <title>Complete sequence of Shewanella woodyi ATCC 51908.</title>
        <authorList>
            <consortium name="US DOE Joint Genome Institute"/>
            <person name="Copeland A."/>
            <person name="Lucas S."/>
            <person name="Lapidus A."/>
            <person name="Glavina del Rio T."/>
            <person name="Dalin E."/>
            <person name="Tice H."/>
            <person name="Bruce D."/>
            <person name="Goodwin L."/>
            <person name="Pitluck S."/>
            <person name="Sims D."/>
            <person name="Brettin T."/>
            <person name="Detter J.C."/>
            <person name="Han C."/>
            <person name="Kuske C.R."/>
            <person name="Schmutz J."/>
            <person name="Larimer F."/>
            <person name="Land M."/>
            <person name="Hauser L."/>
            <person name="Kyrpides N."/>
            <person name="Lykidis A."/>
            <person name="Zhao J.-S."/>
            <person name="Richardson P."/>
        </authorList>
    </citation>
    <scope>NUCLEOTIDE SEQUENCE [LARGE SCALE GENOMIC DNA]</scope>
    <source>
        <strain>ATCC 51908 / MS32</strain>
    </source>
</reference>
<sequence>MQAAKTQDELVKTFKAILKEERFGSQSEIVIALQAEGYNNINQSKVSRMLSKFGAVRTRNAKQEMVYCLPAELGVPTAGSPLKNLVLDVDHNQAMIVVRTSPGAAQLIARLLDSIGKPEGILGTIAGDDTIFITPSNIQEIDKTLITVKSLFNFTN</sequence>
<gene>
    <name evidence="1" type="primary">argR</name>
    <name type="ordered locus">Swoo_1001</name>
</gene>
<dbReference type="EMBL" id="CP000961">
    <property type="protein sequence ID" value="ACA85294.1"/>
    <property type="molecule type" value="Genomic_DNA"/>
</dbReference>
<dbReference type="RefSeq" id="WP_012323641.1">
    <property type="nucleotide sequence ID" value="NC_010506.1"/>
</dbReference>
<dbReference type="SMR" id="B1KGG6"/>
<dbReference type="STRING" id="392500.Swoo_1001"/>
<dbReference type="KEGG" id="swd:Swoo_1001"/>
<dbReference type="eggNOG" id="COG1438">
    <property type="taxonomic scope" value="Bacteria"/>
</dbReference>
<dbReference type="HOGENOM" id="CLU_097103_2_0_6"/>
<dbReference type="UniPathway" id="UPA00068"/>
<dbReference type="Proteomes" id="UP000002168">
    <property type="component" value="Chromosome"/>
</dbReference>
<dbReference type="GO" id="GO:0005737">
    <property type="term" value="C:cytoplasm"/>
    <property type="evidence" value="ECO:0007669"/>
    <property type="project" value="UniProtKB-SubCell"/>
</dbReference>
<dbReference type="GO" id="GO:0034618">
    <property type="term" value="F:arginine binding"/>
    <property type="evidence" value="ECO:0007669"/>
    <property type="project" value="InterPro"/>
</dbReference>
<dbReference type="GO" id="GO:0003677">
    <property type="term" value="F:DNA binding"/>
    <property type="evidence" value="ECO:0007669"/>
    <property type="project" value="UniProtKB-KW"/>
</dbReference>
<dbReference type="GO" id="GO:0003700">
    <property type="term" value="F:DNA-binding transcription factor activity"/>
    <property type="evidence" value="ECO:0007669"/>
    <property type="project" value="UniProtKB-UniRule"/>
</dbReference>
<dbReference type="GO" id="GO:0006526">
    <property type="term" value="P:L-arginine biosynthetic process"/>
    <property type="evidence" value="ECO:0007669"/>
    <property type="project" value="UniProtKB-UniPathway"/>
</dbReference>
<dbReference type="GO" id="GO:0051259">
    <property type="term" value="P:protein complex oligomerization"/>
    <property type="evidence" value="ECO:0007669"/>
    <property type="project" value="InterPro"/>
</dbReference>
<dbReference type="GO" id="GO:1900079">
    <property type="term" value="P:regulation of arginine biosynthetic process"/>
    <property type="evidence" value="ECO:0007669"/>
    <property type="project" value="UniProtKB-UniRule"/>
</dbReference>
<dbReference type="Gene3D" id="3.30.1360.40">
    <property type="match status" value="1"/>
</dbReference>
<dbReference type="Gene3D" id="1.10.10.10">
    <property type="entry name" value="Winged helix-like DNA-binding domain superfamily/Winged helix DNA-binding domain"/>
    <property type="match status" value="1"/>
</dbReference>
<dbReference type="HAMAP" id="MF_00173">
    <property type="entry name" value="Arg_repressor"/>
    <property type="match status" value="1"/>
</dbReference>
<dbReference type="InterPro" id="IPR001669">
    <property type="entry name" value="Arg_repress"/>
</dbReference>
<dbReference type="InterPro" id="IPR020899">
    <property type="entry name" value="Arg_repress_C"/>
</dbReference>
<dbReference type="InterPro" id="IPR036251">
    <property type="entry name" value="Arg_repress_C_sf"/>
</dbReference>
<dbReference type="InterPro" id="IPR020900">
    <property type="entry name" value="Arg_repress_DNA-bd"/>
</dbReference>
<dbReference type="InterPro" id="IPR036388">
    <property type="entry name" value="WH-like_DNA-bd_sf"/>
</dbReference>
<dbReference type="InterPro" id="IPR036390">
    <property type="entry name" value="WH_DNA-bd_sf"/>
</dbReference>
<dbReference type="NCBIfam" id="TIGR01529">
    <property type="entry name" value="argR_whole"/>
    <property type="match status" value="1"/>
</dbReference>
<dbReference type="NCBIfam" id="NF003457">
    <property type="entry name" value="PRK05066.1"/>
    <property type="match status" value="1"/>
</dbReference>
<dbReference type="PANTHER" id="PTHR34471">
    <property type="entry name" value="ARGININE REPRESSOR"/>
    <property type="match status" value="1"/>
</dbReference>
<dbReference type="PANTHER" id="PTHR34471:SF1">
    <property type="entry name" value="ARGININE REPRESSOR"/>
    <property type="match status" value="1"/>
</dbReference>
<dbReference type="Pfam" id="PF01316">
    <property type="entry name" value="Arg_repressor"/>
    <property type="match status" value="1"/>
</dbReference>
<dbReference type="Pfam" id="PF02863">
    <property type="entry name" value="Arg_repressor_C"/>
    <property type="match status" value="1"/>
</dbReference>
<dbReference type="PRINTS" id="PR01467">
    <property type="entry name" value="ARGREPRESSOR"/>
</dbReference>
<dbReference type="SUPFAM" id="SSF55252">
    <property type="entry name" value="C-terminal domain of arginine repressor"/>
    <property type="match status" value="1"/>
</dbReference>
<dbReference type="SUPFAM" id="SSF46785">
    <property type="entry name" value="Winged helix' DNA-binding domain"/>
    <property type="match status" value="1"/>
</dbReference>
<comment type="function">
    <text evidence="1">Regulates arginine biosynthesis genes.</text>
</comment>
<comment type="pathway">
    <text>Amino-acid biosynthesis; L-arginine biosynthesis [regulation].</text>
</comment>
<comment type="subcellular location">
    <subcellularLocation>
        <location evidence="1">Cytoplasm</location>
    </subcellularLocation>
</comment>
<comment type="similarity">
    <text evidence="1">Belongs to the ArgR family.</text>
</comment>
<proteinExistence type="inferred from homology"/>
<feature type="chain" id="PRO_1000097888" description="Arginine repressor">
    <location>
        <begin position="1"/>
        <end position="156"/>
    </location>
</feature>
<keyword id="KW-0028">Amino-acid biosynthesis</keyword>
<keyword id="KW-0055">Arginine biosynthesis</keyword>
<keyword id="KW-0963">Cytoplasm</keyword>
<keyword id="KW-0238">DNA-binding</keyword>
<keyword id="KW-1185">Reference proteome</keyword>
<keyword id="KW-0678">Repressor</keyword>
<keyword id="KW-0804">Transcription</keyword>
<keyword id="KW-0805">Transcription regulation</keyword>
<name>ARGR_SHEWM</name>
<protein>
    <recommendedName>
        <fullName evidence="1">Arginine repressor</fullName>
    </recommendedName>
</protein>